<accession>Q8LPQ6</accession>
<accession>O65615</accession>
<accession>Q67ZJ9</accession>
<accession>Q67ZN9</accession>
<accession>Q682F1</accession>
<keyword id="KW-0025">Alternative splicing</keyword>
<keyword id="KW-0067">ATP-binding</keyword>
<keyword id="KW-0472">Membrane</keyword>
<keyword id="KW-0547">Nucleotide-binding</keyword>
<keyword id="KW-1185">Reference proteome</keyword>
<keyword id="KW-0812">Transmembrane</keyword>
<keyword id="KW-1133">Transmembrane helix</keyword>
<keyword id="KW-0813">Transport</keyword>
<feature type="chain" id="PRO_0000250660" description="ABC transporter B family member 28">
    <location>
        <begin position="1"/>
        <end position="714"/>
    </location>
</feature>
<feature type="transmembrane region" description="Helical" evidence="2">
    <location>
        <begin position="109"/>
        <end position="129"/>
    </location>
</feature>
<feature type="transmembrane region" description="Helical" evidence="2">
    <location>
        <begin position="161"/>
        <end position="181"/>
    </location>
</feature>
<feature type="transmembrane region" description="Helical" evidence="2">
    <location>
        <begin position="240"/>
        <end position="260"/>
    </location>
</feature>
<feature type="transmembrane region" description="Helical" evidence="2">
    <location>
        <begin position="340"/>
        <end position="360"/>
    </location>
</feature>
<feature type="transmembrane region" description="Helical" evidence="2">
    <location>
        <begin position="361"/>
        <end position="381"/>
    </location>
</feature>
<feature type="domain" description="ABC transmembrane type-1" evidence="2">
    <location>
        <begin position="109"/>
        <end position="393"/>
    </location>
</feature>
<feature type="domain" description="ABC transporter" evidence="1">
    <location>
        <begin position="470"/>
        <end position="708"/>
    </location>
</feature>
<feature type="binding site" evidence="1">
    <location>
        <begin position="505"/>
        <end position="512"/>
    </location>
    <ligand>
        <name>ATP</name>
        <dbReference type="ChEBI" id="CHEBI:30616"/>
    </ligand>
</feature>
<feature type="splice variant" id="VSP_020688" description="In isoform 2." evidence="3">
    <location>
        <begin position="1"/>
        <end position="257"/>
    </location>
</feature>
<feature type="splice variant" id="VSP_020689" description="In isoform 3." evidence="3">
    <original>RVAIARSLLKNAPILILDEATSALDAVSERLVQSALNRLMKDRTTLVIAHRLSTVQSANQIAVCSDGKIIELGTHSELVAQKGSYASLVGTQRLAFE</original>
    <variation>V</variation>
    <location>
        <begin position="618"/>
        <end position="714"/>
    </location>
</feature>
<feature type="sequence conflict" description="In Ref. 4; BAD42968/BAD43179/BAD44375." evidence="4" ref="4">
    <original>L</original>
    <variation>P</variation>
    <location>
        <position position="259"/>
    </location>
</feature>
<feature type="sequence conflict" description="In Ref. 4; BAD43841." evidence="4" ref="4">
    <original>V</original>
    <variation>M</variation>
    <location>
        <position position="261"/>
    </location>
</feature>
<protein>
    <recommendedName>
        <fullName>ABC transporter B family member 28</fullName>
        <shortName>ABC transporter ABCB.28</shortName>
        <shortName>AtABCB28</shortName>
    </recommendedName>
    <alternativeName>
        <fullName>Non-intrinsic ABC protein 8</fullName>
    </alternativeName>
    <alternativeName>
        <fullName>TAP-related protein 1</fullName>
    </alternativeName>
</protein>
<organism>
    <name type="scientific">Arabidopsis thaliana</name>
    <name type="common">Mouse-ear cress</name>
    <dbReference type="NCBI Taxonomy" id="3702"/>
    <lineage>
        <taxon>Eukaryota</taxon>
        <taxon>Viridiplantae</taxon>
        <taxon>Streptophyta</taxon>
        <taxon>Embryophyta</taxon>
        <taxon>Tracheophyta</taxon>
        <taxon>Spermatophyta</taxon>
        <taxon>Magnoliopsida</taxon>
        <taxon>eudicotyledons</taxon>
        <taxon>Gunneridae</taxon>
        <taxon>Pentapetalae</taxon>
        <taxon>rosids</taxon>
        <taxon>malvids</taxon>
        <taxon>Brassicales</taxon>
        <taxon>Brassicaceae</taxon>
        <taxon>Camelineae</taxon>
        <taxon>Arabidopsis</taxon>
    </lineage>
</organism>
<dbReference type="EMBL" id="AL022197">
    <property type="protein sequence ID" value="CAA18181.1"/>
    <property type="status" value="ALT_SEQ"/>
    <property type="molecule type" value="Genomic_DNA"/>
</dbReference>
<dbReference type="EMBL" id="AL161563">
    <property type="protein sequence ID" value="CAB81355.1"/>
    <property type="status" value="ALT_SEQ"/>
    <property type="molecule type" value="Genomic_DNA"/>
</dbReference>
<dbReference type="EMBL" id="CP002687">
    <property type="protein sequence ID" value="AEE85061.1"/>
    <property type="molecule type" value="Genomic_DNA"/>
</dbReference>
<dbReference type="EMBL" id="CP002687">
    <property type="protein sequence ID" value="AEE85062.1"/>
    <property type="molecule type" value="Genomic_DNA"/>
</dbReference>
<dbReference type="EMBL" id="AY094470">
    <property type="protein sequence ID" value="AAM19838.1"/>
    <property type="molecule type" value="mRNA"/>
</dbReference>
<dbReference type="EMBL" id="AK175205">
    <property type="protein sequence ID" value="BAD42968.1"/>
    <property type="molecule type" value="mRNA"/>
</dbReference>
<dbReference type="EMBL" id="AK175416">
    <property type="protein sequence ID" value="BAD43179.1"/>
    <property type="molecule type" value="mRNA"/>
</dbReference>
<dbReference type="EMBL" id="AK175486">
    <property type="protein sequence ID" value="BAD43249.1"/>
    <property type="molecule type" value="mRNA"/>
</dbReference>
<dbReference type="EMBL" id="AK175939">
    <property type="protein sequence ID" value="BAD43702.1"/>
    <property type="molecule type" value="mRNA"/>
</dbReference>
<dbReference type="EMBL" id="AK176078">
    <property type="protein sequence ID" value="BAD43841.1"/>
    <property type="molecule type" value="mRNA"/>
</dbReference>
<dbReference type="EMBL" id="AK176118">
    <property type="protein sequence ID" value="BAD43881.1"/>
    <property type="molecule type" value="mRNA"/>
</dbReference>
<dbReference type="EMBL" id="AK176612">
    <property type="protein sequence ID" value="BAD44375.1"/>
    <property type="molecule type" value="mRNA"/>
</dbReference>
<dbReference type="EMBL" id="AK220751">
    <property type="protein sequence ID" value="BAD93929.1"/>
    <property type="molecule type" value="mRNA"/>
</dbReference>
<dbReference type="PIR" id="T05802">
    <property type="entry name" value="T05802"/>
</dbReference>
<dbReference type="RefSeq" id="NP_001031714.1">
    <molecule id="Q8LPQ6-3"/>
    <property type="nucleotide sequence ID" value="NM_001036637.2"/>
</dbReference>
<dbReference type="RefSeq" id="NP_194275.2">
    <molecule id="Q8LPQ6-1"/>
    <property type="nucleotide sequence ID" value="NM_118677.5"/>
</dbReference>
<dbReference type="SMR" id="Q8LPQ6"/>
<dbReference type="FunCoup" id="Q8LPQ6">
    <property type="interactions" value="181"/>
</dbReference>
<dbReference type="STRING" id="3702.Q8LPQ6"/>
<dbReference type="iPTMnet" id="Q8LPQ6"/>
<dbReference type="PaxDb" id="3702-AT4G25450.1"/>
<dbReference type="ProteomicsDB" id="244592">
    <molecule id="Q8LPQ6-1"/>
</dbReference>
<dbReference type="EnsemblPlants" id="AT4G25450.1">
    <molecule id="Q8LPQ6-1"/>
    <property type="protein sequence ID" value="AT4G25450.1"/>
    <property type="gene ID" value="AT4G25450"/>
</dbReference>
<dbReference type="EnsemblPlants" id="AT4G25450.2">
    <molecule id="Q8LPQ6-3"/>
    <property type="protein sequence ID" value="AT4G25450.2"/>
    <property type="gene ID" value="AT4G25450"/>
</dbReference>
<dbReference type="GeneID" id="828650"/>
<dbReference type="Gramene" id="AT4G25450.1">
    <molecule id="Q8LPQ6-1"/>
    <property type="protein sequence ID" value="AT4G25450.1"/>
    <property type="gene ID" value="AT4G25450"/>
</dbReference>
<dbReference type="Gramene" id="AT4G25450.2">
    <molecule id="Q8LPQ6-3"/>
    <property type="protein sequence ID" value="AT4G25450.2"/>
    <property type="gene ID" value="AT4G25450"/>
</dbReference>
<dbReference type="KEGG" id="ath:AT4G25450"/>
<dbReference type="Araport" id="AT4G25450"/>
<dbReference type="TAIR" id="AT4G25450">
    <property type="gene designation" value="ABCB28"/>
</dbReference>
<dbReference type="eggNOG" id="KOG0055">
    <property type="taxonomic scope" value="Eukaryota"/>
</dbReference>
<dbReference type="InParanoid" id="Q8LPQ6"/>
<dbReference type="OMA" id="YTKPFNE"/>
<dbReference type="PhylomeDB" id="Q8LPQ6"/>
<dbReference type="PRO" id="PR:Q8LPQ6"/>
<dbReference type="Proteomes" id="UP000006548">
    <property type="component" value="Chromosome 4"/>
</dbReference>
<dbReference type="ExpressionAtlas" id="Q8LPQ6">
    <property type="expression patterns" value="baseline and differential"/>
</dbReference>
<dbReference type="GO" id="GO:0009507">
    <property type="term" value="C:chloroplast"/>
    <property type="evidence" value="ECO:0007005"/>
    <property type="project" value="TAIR"/>
</dbReference>
<dbReference type="GO" id="GO:0009941">
    <property type="term" value="C:chloroplast envelope"/>
    <property type="evidence" value="ECO:0007005"/>
    <property type="project" value="TAIR"/>
</dbReference>
<dbReference type="GO" id="GO:0005829">
    <property type="term" value="C:cytosol"/>
    <property type="evidence" value="ECO:0007005"/>
    <property type="project" value="TAIR"/>
</dbReference>
<dbReference type="GO" id="GO:0016020">
    <property type="term" value="C:membrane"/>
    <property type="evidence" value="ECO:0007669"/>
    <property type="project" value="UniProtKB-SubCell"/>
</dbReference>
<dbReference type="GO" id="GO:0140359">
    <property type="term" value="F:ABC-type transporter activity"/>
    <property type="evidence" value="ECO:0007669"/>
    <property type="project" value="InterPro"/>
</dbReference>
<dbReference type="GO" id="GO:0005524">
    <property type="term" value="F:ATP binding"/>
    <property type="evidence" value="ECO:0007669"/>
    <property type="project" value="UniProtKB-KW"/>
</dbReference>
<dbReference type="GO" id="GO:0016887">
    <property type="term" value="F:ATP hydrolysis activity"/>
    <property type="evidence" value="ECO:0007669"/>
    <property type="project" value="InterPro"/>
</dbReference>
<dbReference type="CDD" id="cd18557">
    <property type="entry name" value="ABC_6TM_TAP_ABCB8_10_like"/>
    <property type="match status" value="1"/>
</dbReference>
<dbReference type="CDD" id="cd03249">
    <property type="entry name" value="ABC_MTABC3_MDL1_MDL2"/>
    <property type="match status" value="1"/>
</dbReference>
<dbReference type="FunFam" id="1.20.1560.10:FF:000094">
    <property type="entry name" value="ABC transporter B family member 28"/>
    <property type="match status" value="1"/>
</dbReference>
<dbReference type="FunFam" id="3.40.50.300:FF:000403">
    <property type="entry name" value="ATP-binding cassette sub-family B member 8, mitochondrial"/>
    <property type="match status" value="1"/>
</dbReference>
<dbReference type="Gene3D" id="1.20.1560.10">
    <property type="entry name" value="ABC transporter type 1, transmembrane domain"/>
    <property type="match status" value="2"/>
</dbReference>
<dbReference type="Gene3D" id="3.40.50.300">
    <property type="entry name" value="P-loop containing nucleotide triphosphate hydrolases"/>
    <property type="match status" value="1"/>
</dbReference>
<dbReference type="InterPro" id="IPR003593">
    <property type="entry name" value="AAA+_ATPase"/>
</dbReference>
<dbReference type="InterPro" id="IPR011527">
    <property type="entry name" value="ABC1_TM_dom"/>
</dbReference>
<dbReference type="InterPro" id="IPR036640">
    <property type="entry name" value="ABC1_TM_sf"/>
</dbReference>
<dbReference type="InterPro" id="IPR003439">
    <property type="entry name" value="ABC_transporter-like_ATP-bd"/>
</dbReference>
<dbReference type="InterPro" id="IPR017871">
    <property type="entry name" value="ABC_transporter-like_CS"/>
</dbReference>
<dbReference type="InterPro" id="IPR027417">
    <property type="entry name" value="P-loop_NTPase"/>
</dbReference>
<dbReference type="InterPro" id="IPR039421">
    <property type="entry name" value="Type_1_exporter"/>
</dbReference>
<dbReference type="PANTHER" id="PTHR43394:SF7">
    <property type="entry name" value="ABC TRANSPORTER B FAMILY MEMBER 28"/>
    <property type="match status" value="1"/>
</dbReference>
<dbReference type="PANTHER" id="PTHR43394">
    <property type="entry name" value="ATP-DEPENDENT PERMEASE MDL1, MITOCHONDRIAL"/>
    <property type="match status" value="1"/>
</dbReference>
<dbReference type="Pfam" id="PF00664">
    <property type="entry name" value="ABC_membrane"/>
    <property type="match status" value="1"/>
</dbReference>
<dbReference type="Pfam" id="PF00005">
    <property type="entry name" value="ABC_tran"/>
    <property type="match status" value="1"/>
</dbReference>
<dbReference type="SMART" id="SM00382">
    <property type="entry name" value="AAA"/>
    <property type="match status" value="1"/>
</dbReference>
<dbReference type="SUPFAM" id="SSF90123">
    <property type="entry name" value="ABC transporter transmembrane region"/>
    <property type="match status" value="1"/>
</dbReference>
<dbReference type="SUPFAM" id="SSF52540">
    <property type="entry name" value="P-loop containing nucleoside triphosphate hydrolases"/>
    <property type="match status" value="1"/>
</dbReference>
<dbReference type="PROSITE" id="PS50929">
    <property type="entry name" value="ABC_TM1F"/>
    <property type="match status" value="1"/>
</dbReference>
<dbReference type="PROSITE" id="PS00211">
    <property type="entry name" value="ABC_TRANSPORTER_1"/>
    <property type="match status" value="1"/>
</dbReference>
<dbReference type="PROSITE" id="PS50893">
    <property type="entry name" value="ABC_TRANSPORTER_2"/>
    <property type="match status" value="1"/>
</dbReference>
<reference key="1">
    <citation type="journal article" date="1999" name="Nature">
        <title>Sequence and analysis of chromosome 4 of the plant Arabidopsis thaliana.</title>
        <authorList>
            <person name="Mayer K.F.X."/>
            <person name="Schueller C."/>
            <person name="Wambutt R."/>
            <person name="Murphy G."/>
            <person name="Volckaert G."/>
            <person name="Pohl T."/>
            <person name="Duesterhoeft A."/>
            <person name="Stiekema W."/>
            <person name="Entian K.-D."/>
            <person name="Terryn N."/>
            <person name="Harris B."/>
            <person name="Ansorge W."/>
            <person name="Brandt P."/>
            <person name="Grivell L.A."/>
            <person name="Rieger M."/>
            <person name="Weichselgartner M."/>
            <person name="de Simone V."/>
            <person name="Obermaier B."/>
            <person name="Mache R."/>
            <person name="Mueller M."/>
            <person name="Kreis M."/>
            <person name="Delseny M."/>
            <person name="Puigdomenech P."/>
            <person name="Watson M."/>
            <person name="Schmidtheini T."/>
            <person name="Reichert B."/>
            <person name="Portetelle D."/>
            <person name="Perez-Alonso M."/>
            <person name="Boutry M."/>
            <person name="Bancroft I."/>
            <person name="Vos P."/>
            <person name="Hoheisel J."/>
            <person name="Zimmermann W."/>
            <person name="Wedler H."/>
            <person name="Ridley P."/>
            <person name="Langham S.-A."/>
            <person name="McCullagh B."/>
            <person name="Bilham L."/>
            <person name="Robben J."/>
            <person name="van der Schueren J."/>
            <person name="Grymonprez B."/>
            <person name="Chuang Y.-J."/>
            <person name="Vandenbussche F."/>
            <person name="Braeken M."/>
            <person name="Weltjens I."/>
            <person name="Voet M."/>
            <person name="Bastiaens I."/>
            <person name="Aert R."/>
            <person name="Defoor E."/>
            <person name="Weitzenegger T."/>
            <person name="Bothe G."/>
            <person name="Ramsperger U."/>
            <person name="Hilbert H."/>
            <person name="Braun M."/>
            <person name="Holzer E."/>
            <person name="Brandt A."/>
            <person name="Peters S."/>
            <person name="van Staveren M."/>
            <person name="Dirkse W."/>
            <person name="Mooijman P."/>
            <person name="Klein Lankhorst R."/>
            <person name="Rose M."/>
            <person name="Hauf J."/>
            <person name="Koetter P."/>
            <person name="Berneiser S."/>
            <person name="Hempel S."/>
            <person name="Feldpausch M."/>
            <person name="Lamberth S."/>
            <person name="Van den Daele H."/>
            <person name="De Keyser A."/>
            <person name="Buysshaert C."/>
            <person name="Gielen J."/>
            <person name="Villarroel R."/>
            <person name="De Clercq R."/>
            <person name="van Montagu M."/>
            <person name="Rogers J."/>
            <person name="Cronin A."/>
            <person name="Quail M.A."/>
            <person name="Bray-Allen S."/>
            <person name="Clark L."/>
            <person name="Doggett J."/>
            <person name="Hall S."/>
            <person name="Kay M."/>
            <person name="Lennard N."/>
            <person name="McLay K."/>
            <person name="Mayes R."/>
            <person name="Pettett A."/>
            <person name="Rajandream M.A."/>
            <person name="Lyne M."/>
            <person name="Benes V."/>
            <person name="Rechmann S."/>
            <person name="Borkova D."/>
            <person name="Bloecker H."/>
            <person name="Scharfe M."/>
            <person name="Grimm M."/>
            <person name="Loehnert T.-H."/>
            <person name="Dose S."/>
            <person name="de Haan M."/>
            <person name="Maarse A.C."/>
            <person name="Schaefer M."/>
            <person name="Mueller-Auer S."/>
            <person name="Gabel C."/>
            <person name="Fuchs M."/>
            <person name="Fartmann B."/>
            <person name="Granderath K."/>
            <person name="Dauner D."/>
            <person name="Herzl A."/>
            <person name="Neumann S."/>
            <person name="Argiriou A."/>
            <person name="Vitale D."/>
            <person name="Liguori R."/>
            <person name="Piravandi E."/>
            <person name="Massenet O."/>
            <person name="Quigley F."/>
            <person name="Clabauld G."/>
            <person name="Muendlein A."/>
            <person name="Felber R."/>
            <person name="Schnabl S."/>
            <person name="Hiller R."/>
            <person name="Schmidt W."/>
            <person name="Lecharny A."/>
            <person name="Aubourg S."/>
            <person name="Chefdor F."/>
            <person name="Cooke R."/>
            <person name="Berger C."/>
            <person name="Monfort A."/>
            <person name="Casacuberta E."/>
            <person name="Gibbons T."/>
            <person name="Weber N."/>
            <person name="Vandenbol M."/>
            <person name="Bargues M."/>
            <person name="Terol J."/>
            <person name="Torres A."/>
            <person name="Perez-Perez A."/>
            <person name="Purnelle B."/>
            <person name="Bent E."/>
            <person name="Johnson S."/>
            <person name="Tacon D."/>
            <person name="Jesse T."/>
            <person name="Heijnen L."/>
            <person name="Schwarz S."/>
            <person name="Scholler P."/>
            <person name="Heber S."/>
            <person name="Francs P."/>
            <person name="Bielke C."/>
            <person name="Frishman D."/>
            <person name="Haase D."/>
            <person name="Lemcke K."/>
            <person name="Mewes H.-W."/>
            <person name="Stocker S."/>
            <person name="Zaccaria P."/>
            <person name="Bevan M."/>
            <person name="Wilson R.K."/>
            <person name="de la Bastide M."/>
            <person name="Habermann K."/>
            <person name="Parnell L."/>
            <person name="Dedhia N."/>
            <person name="Gnoj L."/>
            <person name="Schutz K."/>
            <person name="Huang E."/>
            <person name="Spiegel L."/>
            <person name="Sekhon M."/>
            <person name="Murray J."/>
            <person name="Sheet P."/>
            <person name="Cordes M."/>
            <person name="Abu-Threideh J."/>
            <person name="Stoneking T."/>
            <person name="Kalicki J."/>
            <person name="Graves T."/>
            <person name="Harmon G."/>
            <person name="Edwards J."/>
            <person name="Latreille P."/>
            <person name="Courtney L."/>
            <person name="Cloud J."/>
            <person name="Abbott A."/>
            <person name="Scott K."/>
            <person name="Johnson D."/>
            <person name="Minx P."/>
            <person name="Bentley D."/>
            <person name="Fulton B."/>
            <person name="Miller N."/>
            <person name="Greco T."/>
            <person name="Kemp K."/>
            <person name="Kramer J."/>
            <person name="Fulton L."/>
            <person name="Mardis E."/>
            <person name="Dante M."/>
            <person name="Pepin K."/>
            <person name="Hillier L.W."/>
            <person name="Nelson J."/>
            <person name="Spieth J."/>
            <person name="Ryan E."/>
            <person name="Andrews S."/>
            <person name="Geisel C."/>
            <person name="Layman D."/>
            <person name="Du H."/>
            <person name="Ali J."/>
            <person name="Berghoff A."/>
            <person name="Jones K."/>
            <person name="Drone K."/>
            <person name="Cotton M."/>
            <person name="Joshu C."/>
            <person name="Antonoiu B."/>
            <person name="Zidanic M."/>
            <person name="Strong C."/>
            <person name="Sun H."/>
            <person name="Lamar B."/>
            <person name="Yordan C."/>
            <person name="Ma P."/>
            <person name="Zhong J."/>
            <person name="Preston R."/>
            <person name="Vil D."/>
            <person name="Shekher M."/>
            <person name="Matero A."/>
            <person name="Shah R."/>
            <person name="Swaby I.K."/>
            <person name="O'Shaughnessy A."/>
            <person name="Rodriguez M."/>
            <person name="Hoffman J."/>
            <person name="Till S."/>
            <person name="Granat S."/>
            <person name="Shohdy N."/>
            <person name="Hasegawa A."/>
            <person name="Hameed A."/>
            <person name="Lodhi M."/>
            <person name="Johnson A."/>
            <person name="Chen E."/>
            <person name="Marra M.A."/>
            <person name="Martienssen R."/>
            <person name="McCombie W.R."/>
        </authorList>
    </citation>
    <scope>NUCLEOTIDE SEQUENCE [LARGE SCALE GENOMIC DNA]</scope>
    <source>
        <strain>cv. Columbia</strain>
    </source>
</reference>
<reference key="2">
    <citation type="journal article" date="2017" name="Plant J.">
        <title>Araport11: a complete reannotation of the Arabidopsis thaliana reference genome.</title>
        <authorList>
            <person name="Cheng C.Y."/>
            <person name="Krishnakumar V."/>
            <person name="Chan A.P."/>
            <person name="Thibaud-Nissen F."/>
            <person name="Schobel S."/>
            <person name="Town C.D."/>
        </authorList>
    </citation>
    <scope>GENOME REANNOTATION</scope>
    <source>
        <strain>cv. Columbia</strain>
    </source>
</reference>
<reference key="3">
    <citation type="journal article" date="2003" name="Science">
        <title>Empirical analysis of transcriptional activity in the Arabidopsis genome.</title>
        <authorList>
            <person name="Yamada K."/>
            <person name="Lim J."/>
            <person name="Dale J.M."/>
            <person name="Chen H."/>
            <person name="Shinn P."/>
            <person name="Palm C.J."/>
            <person name="Southwick A.M."/>
            <person name="Wu H.C."/>
            <person name="Kim C.J."/>
            <person name="Nguyen M."/>
            <person name="Pham P.K."/>
            <person name="Cheuk R.F."/>
            <person name="Karlin-Newmann G."/>
            <person name="Liu S.X."/>
            <person name="Lam B."/>
            <person name="Sakano H."/>
            <person name="Wu T."/>
            <person name="Yu G."/>
            <person name="Miranda M."/>
            <person name="Quach H.L."/>
            <person name="Tripp M."/>
            <person name="Chang C.H."/>
            <person name="Lee J.M."/>
            <person name="Toriumi M.J."/>
            <person name="Chan M.M."/>
            <person name="Tang C.C."/>
            <person name="Onodera C.S."/>
            <person name="Deng J.M."/>
            <person name="Akiyama K."/>
            <person name="Ansari Y."/>
            <person name="Arakawa T."/>
            <person name="Banh J."/>
            <person name="Banno F."/>
            <person name="Bowser L."/>
            <person name="Brooks S.Y."/>
            <person name="Carninci P."/>
            <person name="Chao Q."/>
            <person name="Choy N."/>
            <person name="Enju A."/>
            <person name="Goldsmith A.D."/>
            <person name="Gurjal M."/>
            <person name="Hansen N.F."/>
            <person name="Hayashizaki Y."/>
            <person name="Johnson-Hopson C."/>
            <person name="Hsuan V.W."/>
            <person name="Iida K."/>
            <person name="Karnes M."/>
            <person name="Khan S."/>
            <person name="Koesema E."/>
            <person name="Ishida J."/>
            <person name="Jiang P.X."/>
            <person name="Jones T."/>
            <person name="Kawai J."/>
            <person name="Kamiya A."/>
            <person name="Meyers C."/>
            <person name="Nakajima M."/>
            <person name="Narusaka M."/>
            <person name="Seki M."/>
            <person name="Sakurai T."/>
            <person name="Satou M."/>
            <person name="Tamse R."/>
            <person name="Vaysberg M."/>
            <person name="Wallender E.K."/>
            <person name="Wong C."/>
            <person name="Yamamura Y."/>
            <person name="Yuan S."/>
            <person name="Shinozaki K."/>
            <person name="Davis R.W."/>
            <person name="Theologis A."/>
            <person name="Ecker J.R."/>
        </authorList>
    </citation>
    <scope>NUCLEOTIDE SEQUENCE [LARGE SCALE MRNA] (ISOFORM 1)</scope>
    <source>
        <strain>cv. Columbia</strain>
    </source>
</reference>
<reference key="4">
    <citation type="submission" date="2004-09" db="EMBL/GenBank/DDBJ databases">
        <title>Large-scale analysis of RIKEN Arabidopsis full-length (RAFL) cDNAs.</title>
        <authorList>
            <person name="Totoki Y."/>
            <person name="Seki M."/>
            <person name="Ishida J."/>
            <person name="Nakajima M."/>
            <person name="Enju A."/>
            <person name="Kamiya A."/>
            <person name="Narusaka M."/>
            <person name="Shin-i T."/>
            <person name="Nakagawa M."/>
            <person name="Sakamoto N."/>
            <person name="Oishi K."/>
            <person name="Kohara Y."/>
            <person name="Kobayashi M."/>
            <person name="Toyoda A."/>
            <person name="Sakaki Y."/>
            <person name="Sakurai T."/>
            <person name="Iida K."/>
            <person name="Akiyama K."/>
            <person name="Satou M."/>
            <person name="Toyoda T."/>
            <person name="Konagaya A."/>
            <person name="Carninci P."/>
            <person name="Kawai J."/>
            <person name="Hayashizaki Y."/>
            <person name="Shinozaki K."/>
        </authorList>
    </citation>
    <scope>NUCLEOTIDE SEQUENCE [LARGE SCALE MRNA] (ISOFORMS 1; 2 AND 3)</scope>
    <source>
        <strain>cv. Columbia</strain>
    </source>
</reference>
<reference key="5">
    <citation type="journal article" date="2001" name="J. Biol. Chem.">
        <title>The Arabidopsis thaliana ABC protein superfamily, a complete inventory.</title>
        <authorList>
            <person name="Sanchez-Fernandez R."/>
            <person name="Davies T.G."/>
            <person name="Coleman J.O."/>
            <person name="Rea P.A."/>
        </authorList>
    </citation>
    <scope>GENE FAMILY</scope>
    <scope>NOMENCLATURE</scope>
</reference>
<reference key="6">
    <citation type="journal article" date="2008" name="Trends Plant Sci.">
        <title>Plant ABC proteins - a unified nomenclature and updated inventory.</title>
        <authorList>
            <person name="Verrier P.J."/>
            <person name="Bird D."/>
            <person name="Burla B."/>
            <person name="Dassa E."/>
            <person name="Forestier C."/>
            <person name="Geisler M."/>
            <person name="Klein M."/>
            <person name="Kolukisaoglu H.U."/>
            <person name="Lee Y."/>
            <person name="Martinoia E."/>
            <person name="Murphy A."/>
            <person name="Rea P.A."/>
            <person name="Samuels L."/>
            <person name="Schulz B."/>
            <person name="Spalding E.J."/>
            <person name="Yazaki K."/>
            <person name="Theodoulou F.L."/>
        </authorList>
    </citation>
    <scope>GENE FAMILY</scope>
    <scope>NOMENCLATURE</scope>
</reference>
<name>AB28B_ARATH</name>
<sequence>MASATTLLFHHGSTRVLVARRRCQASVLRPYGGLKPFLSFCSLPNSTAPFRDSLRAKSDGLARAYVTGAPPIVEEPDPKIEESKSEAESKDLISWGLLWSLMSKHKLRLSVCLLTLLGCSTCTLSMPVFSGRFFEVLIGVRPEPLWRLLSKIAVLYSLEPIFTIAFVTNMTAIWENVMAILRAQIFRRVLIQKAEFFDKYKVGELTGLLTSDLGALNSIVNDNISRDRGFRAFTEVFGTICILFTLSPQLAPVLGLLMLAVSVLVAVYKRSTVPVYKSHGLAQATMSDCVSETFSAIRTVRSFSGEKRQMSIFGSQILAYKLSGLKLGTFKSINESITRVAVYISLLALYCLGGSKVKTGELAVGTVVSFIGYTFTLTFAVQGLVNTFGDLRGTFAAIDRINSILNAVDIDEALAYGLERDIHTKKVQDENLKLFLSAGPNVNIRHLDKYYMSNLKSTNNLRTLTWAGDVCLDDVHFAYPLRPDVKVLDGLSLTLNSGTVTALVGSSGAGKSTIVQLLARFYEPTQGRITVGGEDVRMFDKSEWAKVVSIVNQEPVLFSLSVAENIAYGLPNEHVSKDDIIKAAKAANAHDFIISLPQGYDTLVGERGGLLSGGQRQRVAIARSLLKNAPILILDEATSALDAVSERLVQSALNRLMKDRTTLVIAHRLSTVQSANQIAVCSDGKIIELGTHSELVAQKGSYASLVGTQRLAFE</sequence>
<evidence type="ECO:0000255" key="1">
    <source>
        <dbReference type="PROSITE-ProRule" id="PRU00434"/>
    </source>
</evidence>
<evidence type="ECO:0000255" key="2">
    <source>
        <dbReference type="PROSITE-ProRule" id="PRU00441"/>
    </source>
</evidence>
<evidence type="ECO:0000303" key="3">
    <source ref="4"/>
</evidence>
<evidence type="ECO:0000305" key="4"/>
<proteinExistence type="evidence at transcript level"/>
<gene>
    <name type="primary">ABCB28</name>
    <name type="synonym">NAP8</name>
    <name type="ordered locus">At4g25450</name>
    <name type="ORF">M7J2.180</name>
</gene>
<comment type="subcellular location">
    <subcellularLocation>
        <location evidence="2">Membrane</location>
        <topology evidence="2">Multi-pass membrane protein</topology>
    </subcellularLocation>
</comment>
<comment type="alternative products">
    <event type="alternative splicing"/>
    <isoform>
        <id>Q8LPQ6-1</id>
        <name>1</name>
        <sequence type="displayed"/>
    </isoform>
    <isoform>
        <id>Q8LPQ6-2</id>
        <name>2</name>
        <sequence type="described" ref="VSP_020688"/>
    </isoform>
    <isoform>
        <id>Q8LPQ6-3</id>
        <name>3</name>
        <sequence type="described" ref="VSP_020689"/>
    </isoform>
</comment>
<comment type="similarity">
    <text evidence="4">Belongs to the ABC transporter superfamily. ABCB family. Multidrug resistance exporter (TC 3.A.1.201) subfamily.</text>
</comment>
<comment type="sequence caution" evidence="4">
    <conflict type="erroneous gene model prediction">
        <sequence resource="EMBL-CDS" id="CAA18181"/>
    </conflict>
</comment>
<comment type="sequence caution" evidence="4">
    <conflict type="erroneous gene model prediction">
        <sequence resource="EMBL-CDS" id="CAB81355"/>
    </conflict>
</comment>